<proteinExistence type="evidence at protein level"/>
<dbReference type="EMBL" id="FO080288">
    <property type="protein sequence ID" value="CCD62635.1"/>
    <property type="molecule type" value="Genomic_DNA"/>
</dbReference>
<dbReference type="EMBL" id="AF303265">
    <property type="protein sequence ID" value="AAG50223.1"/>
    <property type="molecule type" value="mRNA"/>
</dbReference>
<dbReference type="PIR" id="S44611">
    <property type="entry name" value="S44611"/>
</dbReference>
<dbReference type="RefSeq" id="NP_498806.1">
    <property type="nucleotide sequence ID" value="NM_066405.5"/>
</dbReference>
<dbReference type="SMR" id="P34286"/>
<dbReference type="BioGRID" id="41365">
    <property type="interactions" value="49"/>
</dbReference>
<dbReference type="DIP" id="DIP-24619N"/>
<dbReference type="FunCoup" id="P34286">
    <property type="interactions" value="2706"/>
</dbReference>
<dbReference type="IntAct" id="P34286">
    <property type="interactions" value="14"/>
</dbReference>
<dbReference type="STRING" id="6239.C02F5.9.1"/>
<dbReference type="PaxDb" id="6239-C02F5.9"/>
<dbReference type="PeptideAtlas" id="P34286"/>
<dbReference type="EnsemblMetazoa" id="C02F5.9.1">
    <property type="protein sequence ID" value="C02F5.9.1"/>
    <property type="gene ID" value="WBGene00003952"/>
</dbReference>
<dbReference type="GeneID" id="176161"/>
<dbReference type="KEGG" id="cel:CELE_C02F5.9"/>
<dbReference type="UCSC" id="C02F5.9.1">
    <property type="organism name" value="c. elegans"/>
</dbReference>
<dbReference type="AGR" id="WB:WBGene00003952"/>
<dbReference type="CTD" id="176161"/>
<dbReference type="WormBase" id="C02F5.9">
    <property type="protein sequence ID" value="CE26745"/>
    <property type="gene ID" value="WBGene00003952"/>
    <property type="gene designation" value="pbs-6"/>
</dbReference>
<dbReference type="eggNOG" id="KOG0179">
    <property type="taxonomic scope" value="Eukaryota"/>
</dbReference>
<dbReference type="GeneTree" id="ENSGT00550000075035"/>
<dbReference type="HOGENOM" id="CLU_035750_1_1_1"/>
<dbReference type="InParanoid" id="P34286"/>
<dbReference type="OMA" id="CSGCWCD"/>
<dbReference type="OrthoDB" id="268479at2759"/>
<dbReference type="PhylomeDB" id="P34286"/>
<dbReference type="PRO" id="PR:P34286"/>
<dbReference type="Proteomes" id="UP000001940">
    <property type="component" value="Chromosome III"/>
</dbReference>
<dbReference type="Bgee" id="WBGene00003952">
    <property type="expression patterns" value="Expressed in germ line (C elegans) and 4 other cell types or tissues"/>
</dbReference>
<dbReference type="GO" id="GO:0005829">
    <property type="term" value="C:cytosol"/>
    <property type="evidence" value="ECO:0000318"/>
    <property type="project" value="GO_Central"/>
</dbReference>
<dbReference type="GO" id="GO:0005634">
    <property type="term" value="C:nucleus"/>
    <property type="evidence" value="ECO:0000318"/>
    <property type="project" value="GO_Central"/>
</dbReference>
<dbReference type="GO" id="GO:0019774">
    <property type="term" value="C:proteasome core complex, beta-subunit complex"/>
    <property type="evidence" value="ECO:0000250"/>
    <property type="project" value="UniProtKB"/>
</dbReference>
<dbReference type="GO" id="GO:0043161">
    <property type="term" value="P:proteasome-mediated ubiquitin-dependent protein catabolic process"/>
    <property type="evidence" value="ECO:0000318"/>
    <property type="project" value="GO_Central"/>
</dbReference>
<dbReference type="FunFam" id="3.60.20.10:FF:000090">
    <property type="entry name" value="Proteasome subunit beta"/>
    <property type="match status" value="1"/>
</dbReference>
<dbReference type="Gene3D" id="3.60.20.10">
    <property type="entry name" value="Glutamine Phosphoribosylpyrophosphate, subunit 1, domain 1"/>
    <property type="match status" value="1"/>
</dbReference>
<dbReference type="InterPro" id="IPR029055">
    <property type="entry name" value="Ntn_hydrolases_N"/>
</dbReference>
<dbReference type="InterPro" id="IPR016050">
    <property type="entry name" value="Proteasome_bsu_CS"/>
</dbReference>
<dbReference type="InterPro" id="IPR001353">
    <property type="entry name" value="Proteasome_sua/b"/>
</dbReference>
<dbReference type="InterPro" id="IPR023333">
    <property type="entry name" value="Proteasome_suB-type"/>
</dbReference>
<dbReference type="PANTHER" id="PTHR32194">
    <property type="entry name" value="METALLOPROTEASE TLDD"/>
    <property type="match status" value="1"/>
</dbReference>
<dbReference type="PANTHER" id="PTHR32194:SF2">
    <property type="entry name" value="PROTEASOME SUBUNIT BETA TYPE-1"/>
    <property type="match status" value="1"/>
</dbReference>
<dbReference type="Pfam" id="PF00227">
    <property type="entry name" value="Proteasome"/>
    <property type="match status" value="1"/>
</dbReference>
<dbReference type="SUPFAM" id="SSF56235">
    <property type="entry name" value="N-terminal nucleophile aminohydrolases (Ntn hydrolases)"/>
    <property type="match status" value="1"/>
</dbReference>
<dbReference type="PROSITE" id="PS00854">
    <property type="entry name" value="PROTEASOME_BETA_1"/>
    <property type="match status" value="1"/>
</dbReference>
<dbReference type="PROSITE" id="PS51476">
    <property type="entry name" value="PROTEASOME_BETA_2"/>
    <property type="match status" value="1"/>
</dbReference>
<accession>P34286</accession>
<accession>Q9BMU3</accession>
<protein>
    <recommendedName>
        <fullName>Proteasome subunit beta type-1</fullName>
    </recommendedName>
    <alternativeName>
        <fullName>Proteasome subunit beta 6</fullName>
    </alternativeName>
</protein>
<sequence length="258" mass="28930">MTSFTGITAVANATNEMAMFKQAMKEVAAHPEWMSSRQIERQRWNPYSMEGGSTCAISGENFAIVASDTRMTQNDINILTRDAEKIQILNDNIILTTSGFYGDVLQLKKVLQSRLHKYRFDYRSDMSVDLCAELLSRNLYYRRFFPYYTGAILAGIDEHGKGAVFSYDPIGCIERLGYSASGAAEPMIIPFLDCQIGHVTLSEGYERPELTLDRAISLMKDSFRGAAEREISTGDKIHLVIAEAGKPVVVKFLPLRED</sequence>
<reference key="1">
    <citation type="journal article" date="1994" name="Nature">
        <title>2.2 Mb of contiguous nucleotide sequence from chromosome III of C. elegans.</title>
        <authorList>
            <person name="Wilson R."/>
            <person name="Ainscough R."/>
            <person name="Anderson K."/>
            <person name="Baynes C."/>
            <person name="Berks M."/>
            <person name="Bonfield J."/>
            <person name="Burton J."/>
            <person name="Connell M."/>
            <person name="Copsey T."/>
            <person name="Cooper J."/>
            <person name="Coulson A."/>
            <person name="Craxton M."/>
            <person name="Dear S."/>
            <person name="Du Z."/>
            <person name="Durbin R."/>
            <person name="Favello A."/>
            <person name="Fraser A."/>
            <person name="Fulton L."/>
            <person name="Gardner A."/>
            <person name="Green P."/>
            <person name="Hawkins T."/>
            <person name="Hillier L."/>
            <person name="Jier M."/>
            <person name="Johnston L."/>
            <person name="Jones M."/>
            <person name="Kershaw J."/>
            <person name="Kirsten J."/>
            <person name="Laisster N."/>
            <person name="Latreille P."/>
            <person name="Lightning J."/>
            <person name="Lloyd C."/>
            <person name="Mortimore B."/>
            <person name="O'Callaghan M."/>
            <person name="Parsons J."/>
            <person name="Percy C."/>
            <person name="Rifken L."/>
            <person name="Roopra A."/>
            <person name="Saunders D."/>
            <person name="Shownkeen R."/>
            <person name="Sims M."/>
            <person name="Smaldon N."/>
            <person name="Smith A."/>
            <person name="Smith M."/>
            <person name="Sonnhammer E."/>
            <person name="Staden R."/>
            <person name="Sulston J."/>
            <person name="Thierry-Mieg J."/>
            <person name="Thomas K."/>
            <person name="Vaudin M."/>
            <person name="Vaughan K."/>
            <person name="Waterston R."/>
            <person name="Watson A."/>
            <person name="Weinstock L."/>
            <person name="Wilkinson-Sproat J."/>
            <person name="Wohldman P."/>
        </authorList>
    </citation>
    <scope>NUCLEOTIDE SEQUENCE [LARGE SCALE GENOMIC DNA]</scope>
    <source>
        <strain>Bristol N2</strain>
    </source>
</reference>
<reference key="2">
    <citation type="journal article" date="1998" name="Science">
        <title>Genome sequence of the nematode C. elegans: a platform for investigating biology.</title>
        <authorList>
            <consortium name="The C. elegans sequencing consortium"/>
        </authorList>
    </citation>
    <scope>NUCLEOTIDE SEQUENCE [LARGE SCALE GENOMIC DNA]</scope>
    <source>
        <strain>Bristol N2</strain>
    </source>
</reference>
<reference key="3">
    <citation type="submission" date="2000-08" db="EMBL/GenBank/DDBJ databases">
        <title>The Caenorhabditis elegans transcriptome project, a complementary view of the genome.</title>
        <authorList>
            <person name="Kohara Y."/>
            <person name="Shin'i T."/>
            <person name="Suzuki Y."/>
            <person name="Sugano S."/>
            <person name="Potdevin M."/>
            <person name="Thierry-Mieg Y."/>
            <person name="Thierry-Mieg D."/>
            <person name="Thierry-Mieg J."/>
        </authorList>
    </citation>
    <scope>NUCLEOTIDE SEQUENCE [LARGE SCALE MRNA]</scope>
    <source>
        <strain>Bristol N2</strain>
    </source>
</reference>
<comment type="function">
    <text evidence="1">Non-catalytic component of the proteasome, a multicatalytic proteinase complex which is characterized by its ability to cleave peptides with Arg, Phe, Tyr, Leu, and Glu adjacent to the leaving group at neutral or slightly basic pH. The proteasome has an ATP-dependent proteolytic activity (By similarity).</text>
</comment>
<comment type="subunit">
    <text evidence="1">The 26S proteasome consists of a 20S proteasome core and two 19S regulatory subunits. The 20S proteasome core is composed of 28 subunits that are arranged in four stacked rings, resulting in a barrel-shaped structure. The two end rings are each formed by seven alpha subunits, and the two central rings are each formed by seven beta subunits. The catalytic chamber with the active sites is on the inside of the barrel (By similarity).</text>
</comment>
<comment type="interaction">
    <interactant intactId="EBI-313778">
        <id>P34286</id>
    </interactant>
    <interactant intactId="EBI-313801">
        <id>O17200</id>
        <label>fbxa-166</label>
    </interactant>
    <organismsDiffer>false</organismsDiffer>
    <experiments>3</experiments>
</comment>
<comment type="interaction">
    <interactant intactId="EBI-313778">
        <id>P34286</id>
    </interactant>
    <interactant intactId="EBI-312105">
        <id>Q9XVK6</id>
        <label>wve-1</label>
    </interactant>
    <organismsDiffer>false</organismsDiffer>
    <experiments>3</experiments>
</comment>
<comment type="subcellular location">
    <subcellularLocation>
        <location evidence="2">Cytoplasm</location>
    </subcellularLocation>
    <subcellularLocation>
        <location evidence="1">Nucleus</location>
    </subcellularLocation>
</comment>
<comment type="similarity">
    <text evidence="2">Belongs to the peptidase T1B family.</text>
</comment>
<keyword id="KW-0963">Cytoplasm</keyword>
<keyword id="KW-0539">Nucleus</keyword>
<keyword id="KW-0647">Proteasome</keyword>
<keyword id="KW-1185">Reference proteome</keyword>
<name>PSB1_CAEEL</name>
<gene>
    <name type="primary">pbs-6</name>
    <name type="ORF">C02F5.9</name>
</gene>
<feature type="chain" id="PRO_0000148035" description="Proteasome subunit beta type-1">
    <location>
        <begin position="1"/>
        <end position="258"/>
    </location>
</feature>
<organism>
    <name type="scientific">Caenorhabditis elegans</name>
    <dbReference type="NCBI Taxonomy" id="6239"/>
    <lineage>
        <taxon>Eukaryota</taxon>
        <taxon>Metazoa</taxon>
        <taxon>Ecdysozoa</taxon>
        <taxon>Nematoda</taxon>
        <taxon>Chromadorea</taxon>
        <taxon>Rhabditida</taxon>
        <taxon>Rhabditina</taxon>
        <taxon>Rhabditomorpha</taxon>
        <taxon>Rhabditoidea</taxon>
        <taxon>Rhabditidae</taxon>
        <taxon>Peloderinae</taxon>
        <taxon>Caenorhabditis</taxon>
    </lineage>
</organism>
<evidence type="ECO:0000250" key="1"/>
<evidence type="ECO:0000255" key="2">
    <source>
        <dbReference type="PROSITE-ProRule" id="PRU00809"/>
    </source>
</evidence>